<proteinExistence type="inferred from homology"/>
<gene>
    <name evidence="1" type="primary">cmoB</name>
    <name type="ordered locus">Shew185_2310</name>
</gene>
<sequence length="331" mass="37921">MISFSSFYQQIADSNLQHWLETLPSILGKWQRDHKHGNLPKWEKVLNKLHYPAPDQVDFVDSVTVGSGEQLSPGEKEKLENLLRLFMPWRKGPFHIHGIHIDTEWRSDWKWDRVKQHISPLKNRTVLDVGCGSGYHMWRMLGSGAKRVVGIDPSPLFLCQFEAVKRLAGTHHPVHLLPLGIEELPPLDAFDTVFSMGVLYHRRSPIDHLLQLRDQLRTGGELVLETLVIDGDENAVLVPQDRYGKMNNVWFIPSVAALMLWLKKCDFTDIRCVDTDVTALAEQRRTDWMPNESLVEYLDPNDITKTVEGYPAPKRATIIAVKNQPNQDLIS</sequence>
<feature type="chain" id="PRO_0000313965" description="tRNA U34 carboxymethyltransferase">
    <location>
        <begin position="1"/>
        <end position="331"/>
    </location>
</feature>
<feature type="binding site" evidence="1">
    <location>
        <position position="91"/>
    </location>
    <ligand>
        <name>carboxy-S-adenosyl-L-methionine</name>
        <dbReference type="ChEBI" id="CHEBI:134278"/>
    </ligand>
</feature>
<feature type="binding site" evidence="1">
    <location>
        <position position="105"/>
    </location>
    <ligand>
        <name>carboxy-S-adenosyl-L-methionine</name>
        <dbReference type="ChEBI" id="CHEBI:134278"/>
    </ligand>
</feature>
<feature type="binding site" evidence="1">
    <location>
        <position position="110"/>
    </location>
    <ligand>
        <name>carboxy-S-adenosyl-L-methionine</name>
        <dbReference type="ChEBI" id="CHEBI:134278"/>
    </ligand>
</feature>
<feature type="binding site" evidence="1">
    <location>
        <position position="130"/>
    </location>
    <ligand>
        <name>carboxy-S-adenosyl-L-methionine</name>
        <dbReference type="ChEBI" id="CHEBI:134278"/>
    </ligand>
</feature>
<feature type="binding site" evidence="1">
    <location>
        <begin position="152"/>
        <end position="154"/>
    </location>
    <ligand>
        <name>carboxy-S-adenosyl-L-methionine</name>
        <dbReference type="ChEBI" id="CHEBI:134278"/>
    </ligand>
</feature>
<feature type="binding site" evidence="1">
    <location>
        <begin position="181"/>
        <end position="182"/>
    </location>
    <ligand>
        <name>carboxy-S-adenosyl-L-methionine</name>
        <dbReference type="ChEBI" id="CHEBI:134278"/>
    </ligand>
</feature>
<feature type="binding site" evidence="1">
    <location>
        <position position="196"/>
    </location>
    <ligand>
        <name>carboxy-S-adenosyl-L-methionine</name>
        <dbReference type="ChEBI" id="CHEBI:134278"/>
    </ligand>
</feature>
<feature type="binding site" evidence="1">
    <location>
        <position position="200"/>
    </location>
    <ligand>
        <name>carboxy-S-adenosyl-L-methionine</name>
        <dbReference type="ChEBI" id="CHEBI:134278"/>
    </ligand>
</feature>
<feature type="binding site" evidence="1">
    <location>
        <position position="315"/>
    </location>
    <ligand>
        <name>carboxy-S-adenosyl-L-methionine</name>
        <dbReference type="ChEBI" id="CHEBI:134278"/>
    </ligand>
</feature>
<name>CMOB_SHEB8</name>
<organism>
    <name type="scientific">Shewanella baltica (strain OS185)</name>
    <dbReference type="NCBI Taxonomy" id="402882"/>
    <lineage>
        <taxon>Bacteria</taxon>
        <taxon>Pseudomonadati</taxon>
        <taxon>Pseudomonadota</taxon>
        <taxon>Gammaproteobacteria</taxon>
        <taxon>Alteromonadales</taxon>
        <taxon>Shewanellaceae</taxon>
        <taxon>Shewanella</taxon>
    </lineage>
</organism>
<dbReference type="EC" id="2.5.1.-" evidence="1"/>
<dbReference type="EMBL" id="CP000753">
    <property type="protein sequence ID" value="ABS08448.1"/>
    <property type="molecule type" value="Genomic_DNA"/>
</dbReference>
<dbReference type="RefSeq" id="WP_006086784.1">
    <property type="nucleotide sequence ID" value="NC_009665.1"/>
</dbReference>
<dbReference type="SMR" id="A6WNQ9"/>
<dbReference type="GeneID" id="11772543"/>
<dbReference type="KEGG" id="sbm:Shew185_2310"/>
<dbReference type="HOGENOM" id="CLU_052665_0_0_6"/>
<dbReference type="GO" id="GO:0008168">
    <property type="term" value="F:methyltransferase activity"/>
    <property type="evidence" value="ECO:0007669"/>
    <property type="project" value="TreeGrafter"/>
</dbReference>
<dbReference type="GO" id="GO:0016765">
    <property type="term" value="F:transferase activity, transferring alkyl or aryl (other than methyl) groups"/>
    <property type="evidence" value="ECO:0007669"/>
    <property type="project" value="UniProtKB-UniRule"/>
</dbReference>
<dbReference type="GO" id="GO:0002098">
    <property type="term" value="P:tRNA wobble uridine modification"/>
    <property type="evidence" value="ECO:0007669"/>
    <property type="project" value="InterPro"/>
</dbReference>
<dbReference type="CDD" id="cd02440">
    <property type="entry name" value="AdoMet_MTases"/>
    <property type="match status" value="1"/>
</dbReference>
<dbReference type="Gene3D" id="3.40.50.150">
    <property type="entry name" value="Vaccinia Virus protein VP39"/>
    <property type="match status" value="1"/>
</dbReference>
<dbReference type="HAMAP" id="MF_01590">
    <property type="entry name" value="tRNA_carboxymethyltr_CmoB"/>
    <property type="match status" value="1"/>
</dbReference>
<dbReference type="InterPro" id="IPR010017">
    <property type="entry name" value="CmoB"/>
</dbReference>
<dbReference type="InterPro" id="IPR027555">
    <property type="entry name" value="Mo5U34_MeTrfas-like"/>
</dbReference>
<dbReference type="InterPro" id="IPR029063">
    <property type="entry name" value="SAM-dependent_MTases_sf"/>
</dbReference>
<dbReference type="NCBIfam" id="NF011650">
    <property type="entry name" value="PRK15068.1"/>
    <property type="match status" value="1"/>
</dbReference>
<dbReference type="NCBIfam" id="TIGR00452">
    <property type="entry name" value="tRNA 5-methoxyuridine(34)/uridine 5-oxyacetic acid(34) synthase CmoB"/>
    <property type="match status" value="1"/>
</dbReference>
<dbReference type="PANTHER" id="PTHR43464">
    <property type="entry name" value="METHYLTRANSFERASE"/>
    <property type="match status" value="1"/>
</dbReference>
<dbReference type="PANTHER" id="PTHR43464:SF95">
    <property type="entry name" value="TRNA U34 CARBOXYMETHYLTRANSFERASE"/>
    <property type="match status" value="1"/>
</dbReference>
<dbReference type="Pfam" id="PF08003">
    <property type="entry name" value="Methyltransf_9"/>
    <property type="match status" value="1"/>
</dbReference>
<dbReference type="SUPFAM" id="SSF53335">
    <property type="entry name" value="S-adenosyl-L-methionine-dependent methyltransferases"/>
    <property type="match status" value="1"/>
</dbReference>
<comment type="function">
    <text evidence="1">Catalyzes carboxymethyl transfer from carboxy-S-adenosyl-L-methionine (Cx-SAM) to 5-hydroxyuridine (ho5U) to form 5-carboxymethoxyuridine (cmo5U) at position 34 in tRNAs.</text>
</comment>
<comment type="catalytic activity">
    <reaction evidence="1">
        <text>carboxy-S-adenosyl-L-methionine + 5-hydroxyuridine(34) in tRNA = 5-carboxymethoxyuridine(34) in tRNA + S-adenosyl-L-homocysteine + H(+)</text>
        <dbReference type="Rhea" id="RHEA:52848"/>
        <dbReference type="Rhea" id="RHEA-COMP:13381"/>
        <dbReference type="Rhea" id="RHEA-COMP:13383"/>
        <dbReference type="ChEBI" id="CHEBI:15378"/>
        <dbReference type="ChEBI" id="CHEBI:57856"/>
        <dbReference type="ChEBI" id="CHEBI:134278"/>
        <dbReference type="ChEBI" id="CHEBI:136877"/>
        <dbReference type="ChEBI" id="CHEBI:136879"/>
    </reaction>
</comment>
<comment type="subunit">
    <text evidence="1">Homotetramer.</text>
</comment>
<comment type="similarity">
    <text evidence="1">Belongs to the class I-like SAM-binding methyltransferase superfamily. CmoB family.</text>
</comment>
<accession>A6WNQ9</accession>
<evidence type="ECO:0000255" key="1">
    <source>
        <dbReference type="HAMAP-Rule" id="MF_01590"/>
    </source>
</evidence>
<protein>
    <recommendedName>
        <fullName evidence="1">tRNA U34 carboxymethyltransferase</fullName>
        <ecNumber evidence="1">2.5.1.-</ecNumber>
    </recommendedName>
</protein>
<reference key="1">
    <citation type="submission" date="2007-07" db="EMBL/GenBank/DDBJ databases">
        <title>Complete sequence of chromosome of Shewanella baltica OS185.</title>
        <authorList>
            <consortium name="US DOE Joint Genome Institute"/>
            <person name="Copeland A."/>
            <person name="Lucas S."/>
            <person name="Lapidus A."/>
            <person name="Barry K."/>
            <person name="Glavina del Rio T."/>
            <person name="Dalin E."/>
            <person name="Tice H."/>
            <person name="Pitluck S."/>
            <person name="Sims D."/>
            <person name="Brettin T."/>
            <person name="Bruce D."/>
            <person name="Detter J.C."/>
            <person name="Han C."/>
            <person name="Schmutz J."/>
            <person name="Larimer F."/>
            <person name="Land M."/>
            <person name="Hauser L."/>
            <person name="Kyrpides N."/>
            <person name="Mikhailova N."/>
            <person name="Brettar I."/>
            <person name="Rodrigues J."/>
            <person name="Konstantinidis K."/>
            <person name="Tiedje J."/>
            <person name="Richardson P."/>
        </authorList>
    </citation>
    <scope>NUCLEOTIDE SEQUENCE [LARGE SCALE GENOMIC DNA]</scope>
    <source>
        <strain>OS185</strain>
    </source>
</reference>
<keyword id="KW-0808">Transferase</keyword>
<keyword id="KW-0819">tRNA processing</keyword>